<keyword id="KW-0028">Amino-acid biosynthesis</keyword>
<keyword id="KW-0067">ATP-binding</keyword>
<keyword id="KW-0963">Cytoplasm</keyword>
<keyword id="KW-0418">Kinase</keyword>
<keyword id="KW-0547">Nucleotide-binding</keyword>
<keyword id="KW-0791">Threonine biosynthesis</keyword>
<keyword id="KW-0808">Transferase</keyword>
<comment type="function">
    <text evidence="1">Catalyzes the ATP-dependent phosphorylation of L-homoserine to L-homoserine phosphate.</text>
</comment>
<comment type="catalytic activity">
    <reaction evidence="1">
        <text>L-homoserine + ATP = O-phospho-L-homoserine + ADP + H(+)</text>
        <dbReference type="Rhea" id="RHEA:13985"/>
        <dbReference type="ChEBI" id="CHEBI:15378"/>
        <dbReference type="ChEBI" id="CHEBI:30616"/>
        <dbReference type="ChEBI" id="CHEBI:57476"/>
        <dbReference type="ChEBI" id="CHEBI:57590"/>
        <dbReference type="ChEBI" id="CHEBI:456216"/>
        <dbReference type="EC" id="2.7.1.39"/>
    </reaction>
</comment>
<comment type="pathway">
    <text evidence="1">Amino-acid biosynthesis; L-threonine biosynthesis; L-threonine from L-aspartate: step 4/5.</text>
</comment>
<comment type="subcellular location">
    <subcellularLocation>
        <location evidence="1">Cytoplasm</location>
    </subcellularLocation>
</comment>
<comment type="similarity">
    <text evidence="1">Belongs to the GHMP kinase family. Homoserine kinase subfamily.</text>
</comment>
<dbReference type="EC" id="2.7.1.39" evidence="1"/>
<dbReference type="EMBL" id="CU928162">
    <property type="protein sequence ID" value="CAR06226.1"/>
    <property type="molecule type" value="Genomic_DNA"/>
</dbReference>
<dbReference type="RefSeq" id="WP_000241653.1">
    <property type="nucleotide sequence ID" value="NC_011745.1"/>
</dbReference>
<dbReference type="SMR" id="B7N2U2"/>
<dbReference type="KEGG" id="ecq:ECED1_0002"/>
<dbReference type="HOGENOM" id="CLU_041243_1_1_6"/>
<dbReference type="UniPathway" id="UPA00050">
    <property type="reaction ID" value="UER00064"/>
</dbReference>
<dbReference type="Proteomes" id="UP000000748">
    <property type="component" value="Chromosome"/>
</dbReference>
<dbReference type="GO" id="GO:0005737">
    <property type="term" value="C:cytoplasm"/>
    <property type="evidence" value="ECO:0007669"/>
    <property type="project" value="UniProtKB-SubCell"/>
</dbReference>
<dbReference type="GO" id="GO:0005524">
    <property type="term" value="F:ATP binding"/>
    <property type="evidence" value="ECO:0007669"/>
    <property type="project" value="UniProtKB-UniRule"/>
</dbReference>
<dbReference type="GO" id="GO:0004413">
    <property type="term" value="F:homoserine kinase activity"/>
    <property type="evidence" value="ECO:0007669"/>
    <property type="project" value="UniProtKB-UniRule"/>
</dbReference>
<dbReference type="GO" id="GO:0009088">
    <property type="term" value="P:threonine biosynthetic process"/>
    <property type="evidence" value="ECO:0007669"/>
    <property type="project" value="UniProtKB-UniRule"/>
</dbReference>
<dbReference type="FunFam" id="3.30.230.10:FF:000020">
    <property type="entry name" value="Homoserine kinase"/>
    <property type="match status" value="1"/>
</dbReference>
<dbReference type="FunFam" id="3.30.70.890:FF:000002">
    <property type="entry name" value="Homoserine kinase"/>
    <property type="match status" value="1"/>
</dbReference>
<dbReference type="Gene3D" id="3.30.230.10">
    <property type="match status" value="1"/>
</dbReference>
<dbReference type="Gene3D" id="3.30.70.890">
    <property type="entry name" value="GHMP kinase, C-terminal domain"/>
    <property type="match status" value="1"/>
</dbReference>
<dbReference type="HAMAP" id="MF_00384">
    <property type="entry name" value="Homoser_kinase"/>
    <property type="match status" value="1"/>
</dbReference>
<dbReference type="InterPro" id="IPR013750">
    <property type="entry name" value="GHMP_kinase_C_dom"/>
</dbReference>
<dbReference type="InterPro" id="IPR036554">
    <property type="entry name" value="GHMP_kinase_C_sf"/>
</dbReference>
<dbReference type="InterPro" id="IPR006204">
    <property type="entry name" value="GHMP_kinase_N_dom"/>
</dbReference>
<dbReference type="InterPro" id="IPR006203">
    <property type="entry name" value="GHMP_knse_ATP-bd_CS"/>
</dbReference>
<dbReference type="InterPro" id="IPR000870">
    <property type="entry name" value="Homoserine_kinase"/>
</dbReference>
<dbReference type="InterPro" id="IPR020568">
    <property type="entry name" value="Ribosomal_Su5_D2-typ_SF"/>
</dbReference>
<dbReference type="InterPro" id="IPR014721">
    <property type="entry name" value="Ribsml_uS5_D2-typ_fold_subgr"/>
</dbReference>
<dbReference type="NCBIfam" id="NF002288">
    <property type="entry name" value="PRK01212.1-4"/>
    <property type="match status" value="1"/>
</dbReference>
<dbReference type="NCBIfam" id="TIGR00191">
    <property type="entry name" value="thrB"/>
    <property type="match status" value="1"/>
</dbReference>
<dbReference type="PANTHER" id="PTHR20861:SF1">
    <property type="entry name" value="HOMOSERINE KINASE"/>
    <property type="match status" value="1"/>
</dbReference>
<dbReference type="PANTHER" id="PTHR20861">
    <property type="entry name" value="HOMOSERINE/4-DIPHOSPHOCYTIDYL-2-C-METHYL-D-ERYTHRITOL KINASE"/>
    <property type="match status" value="1"/>
</dbReference>
<dbReference type="Pfam" id="PF08544">
    <property type="entry name" value="GHMP_kinases_C"/>
    <property type="match status" value="1"/>
</dbReference>
<dbReference type="Pfam" id="PF00288">
    <property type="entry name" value="GHMP_kinases_N"/>
    <property type="match status" value="1"/>
</dbReference>
<dbReference type="PIRSF" id="PIRSF000676">
    <property type="entry name" value="Homoser_kin"/>
    <property type="match status" value="1"/>
</dbReference>
<dbReference type="PRINTS" id="PR00958">
    <property type="entry name" value="HOMSERKINASE"/>
</dbReference>
<dbReference type="SUPFAM" id="SSF55060">
    <property type="entry name" value="GHMP Kinase, C-terminal domain"/>
    <property type="match status" value="1"/>
</dbReference>
<dbReference type="SUPFAM" id="SSF54211">
    <property type="entry name" value="Ribosomal protein S5 domain 2-like"/>
    <property type="match status" value="1"/>
</dbReference>
<dbReference type="PROSITE" id="PS00627">
    <property type="entry name" value="GHMP_KINASES_ATP"/>
    <property type="match status" value="1"/>
</dbReference>
<name>KHSE_ECO81</name>
<reference key="1">
    <citation type="journal article" date="2009" name="PLoS Genet.">
        <title>Organised genome dynamics in the Escherichia coli species results in highly diverse adaptive paths.</title>
        <authorList>
            <person name="Touchon M."/>
            <person name="Hoede C."/>
            <person name="Tenaillon O."/>
            <person name="Barbe V."/>
            <person name="Baeriswyl S."/>
            <person name="Bidet P."/>
            <person name="Bingen E."/>
            <person name="Bonacorsi S."/>
            <person name="Bouchier C."/>
            <person name="Bouvet O."/>
            <person name="Calteau A."/>
            <person name="Chiapello H."/>
            <person name="Clermont O."/>
            <person name="Cruveiller S."/>
            <person name="Danchin A."/>
            <person name="Diard M."/>
            <person name="Dossat C."/>
            <person name="Karoui M.E."/>
            <person name="Frapy E."/>
            <person name="Garry L."/>
            <person name="Ghigo J.M."/>
            <person name="Gilles A.M."/>
            <person name="Johnson J."/>
            <person name="Le Bouguenec C."/>
            <person name="Lescat M."/>
            <person name="Mangenot S."/>
            <person name="Martinez-Jehanne V."/>
            <person name="Matic I."/>
            <person name="Nassif X."/>
            <person name="Oztas S."/>
            <person name="Petit M.A."/>
            <person name="Pichon C."/>
            <person name="Rouy Z."/>
            <person name="Ruf C.S."/>
            <person name="Schneider D."/>
            <person name="Tourret J."/>
            <person name="Vacherie B."/>
            <person name="Vallenet D."/>
            <person name="Medigue C."/>
            <person name="Rocha E.P.C."/>
            <person name="Denamur E."/>
        </authorList>
    </citation>
    <scope>NUCLEOTIDE SEQUENCE [LARGE SCALE GENOMIC DNA]</scope>
    <source>
        <strain>ED1a</strain>
    </source>
</reference>
<accession>B7N2U2</accession>
<proteinExistence type="inferred from homology"/>
<organism>
    <name type="scientific">Escherichia coli O81 (strain ED1a)</name>
    <dbReference type="NCBI Taxonomy" id="585397"/>
    <lineage>
        <taxon>Bacteria</taxon>
        <taxon>Pseudomonadati</taxon>
        <taxon>Pseudomonadota</taxon>
        <taxon>Gammaproteobacteria</taxon>
        <taxon>Enterobacterales</taxon>
        <taxon>Enterobacteriaceae</taxon>
        <taxon>Escherichia</taxon>
    </lineage>
</organism>
<sequence length="310" mass="33626">MVKVYAPASSANMSVGFDVLGAAVTPVDGALLGDVVTVEAAETFSLNNLGRFADKLPSEPRENIVYQCWERFCQELGKQIPVAMTLEKNMPIGSGLGSSACSVVAALMAMNEHCGKLLNDTRLLALMGELEGRISGSIHYDNVAPCFLGGMQLMIEENDIISQQVPGFDEWLWVLAYPGIKVSTAEARAILPAQYRRQDCIAHGRHLAGFIHACYSRQPELAAKLMKDVIAEPYRERLLPGFRQARQAVAEIGAVASGISGSGPTLFALCDKPDTAQRVADWLGKNYLQNQEGFVHICRLDTAGARVLEN</sequence>
<evidence type="ECO:0000255" key="1">
    <source>
        <dbReference type="HAMAP-Rule" id="MF_00384"/>
    </source>
</evidence>
<feature type="chain" id="PRO_1000134251" description="Homoserine kinase">
    <location>
        <begin position="1"/>
        <end position="310"/>
    </location>
</feature>
<feature type="binding site" evidence="1">
    <location>
        <begin position="91"/>
        <end position="101"/>
    </location>
    <ligand>
        <name>ATP</name>
        <dbReference type="ChEBI" id="CHEBI:30616"/>
    </ligand>
</feature>
<protein>
    <recommendedName>
        <fullName evidence="1">Homoserine kinase</fullName>
        <shortName evidence="1">HK</shortName>
        <shortName evidence="1">HSK</shortName>
        <ecNumber evidence="1">2.7.1.39</ecNumber>
    </recommendedName>
</protein>
<gene>
    <name evidence="1" type="primary">thrB</name>
    <name type="ordered locus">ECED1_0002</name>
</gene>